<reference key="1">
    <citation type="journal article" date="2007" name="Proc. Natl. Acad. Sci. U.S.A.">
        <title>Genome plasticity of BCG and impact on vaccine efficacy.</title>
        <authorList>
            <person name="Brosch R."/>
            <person name="Gordon S.V."/>
            <person name="Garnier T."/>
            <person name="Eiglmeier K."/>
            <person name="Frigui W."/>
            <person name="Valenti P."/>
            <person name="Dos Santos S."/>
            <person name="Duthoy S."/>
            <person name="Lacroix C."/>
            <person name="Garcia-Pelayo C."/>
            <person name="Inwald J.K."/>
            <person name="Golby P."/>
            <person name="Garcia J.N."/>
            <person name="Hewinson R.G."/>
            <person name="Behr M.A."/>
            <person name="Quail M.A."/>
            <person name="Churcher C."/>
            <person name="Barrell B.G."/>
            <person name="Parkhill J."/>
            <person name="Cole S.T."/>
        </authorList>
    </citation>
    <scope>NUCLEOTIDE SEQUENCE [LARGE SCALE GENOMIC DNA]</scope>
    <source>
        <strain>BCG / Pasteur 1173P2</strain>
    </source>
</reference>
<name>RL36_MYCBP</name>
<sequence>MKVNPSVKPICDKCRLIRRHGRVMVICSDPRHKQRQG</sequence>
<proteinExistence type="inferred from homology"/>
<gene>
    <name evidence="1" type="primary">rpmJ</name>
    <name type="ordered locus">BCG_3526c</name>
</gene>
<dbReference type="EMBL" id="AM408590">
    <property type="protein sequence ID" value="CAL73515.1"/>
    <property type="molecule type" value="Genomic_DNA"/>
</dbReference>
<dbReference type="RefSeq" id="WP_003418367.1">
    <property type="nucleotide sequence ID" value="NC_008769.1"/>
</dbReference>
<dbReference type="SMR" id="A1KPE7"/>
<dbReference type="GeneID" id="45427450"/>
<dbReference type="KEGG" id="mbb:BCG_3526c"/>
<dbReference type="HOGENOM" id="CLU_135723_6_2_11"/>
<dbReference type="Proteomes" id="UP000001472">
    <property type="component" value="Chromosome"/>
</dbReference>
<dbReference type="GO" id="GO:0005737">
    <property type="term" value="C:cytoplasm"/>
    <property type="evidence" value="ECO:0007669"/>
    <property type="project" value="UniProtKB-ARBA"/>
</dbReference>
<dbReference type="GO" id="GO:1990904">
    <property type="term" value="C:ribonucleoprotein complex"/>
    <property type="evidence" value="ECO:0007669"/>
    <property type="project" value="UniProtKB-KW"/>
</dbReference>
<dbReference type="GO" id="GO:0005840">
    <property type="term" value="C:ribosome"/>
    <property type="evidence" value="ECO:0007669"/>
    <property type="project" value="UniProtKB-KW"/>
</dbReference>
<dbReference type="GO" id="GO:0003735">
    <property type="term" value="F:structural constituent of ribosome"/>
    <property type="evidence" value="ECO:0007669"/>
    <property type="project" value="InterPro"/>
</dbReference>
<dbReference type="GO" id="GO:0006412">
    <property type="term" value="P:translation"/>
    <property type="evidence" value="ECO:0007669"/>
    <property type="project" value="UniProtKB-UniRule"/>
</dbReference>
<dbReference type="HAMAP" id="MF_00251">
    <property type="entry name" value="Ribosomal_bL36"/>
    <property type="match status" value="1"/>
</dbReference>
<dbReference type="InterPro" id="IPR000473">
    <property type="entry name" value="Ribosomal_bL36"/>
</dbReference>
<dbReference type="InterPro" id="IPR035977">
    <property type="entry name" value="Ribosomal_bL36_sp"/>
</dbReference>
<dbReference type="NCBIfam" id="TIGR01022">
    <property type="entry name" value="rpmJ_bact"/>
    <property type="match status" value="1"/>
</dbReference>
<dbReference type="PANTHER" id="PTHR42888">
    <property type="entry name" value="50S RIBOSOMAL PROTEIN L36, CHLOROPLASTIC"/>
    <property type="match status" value="1"/>
</dbReference>
<dbReference type="PANTHER" id="PTHR42888:SF1">
    <property type="entry name" value="LARGE RIBOSOMAL SUBUNIT PROTEIN BL36C"/>
    <property type="match status" value="1"/>
</dbReference>
<dbReference type="Pfam" id="PF00444">
    <property type="entry name" value="Ribosomal_L36"/>
    <property type="match status" value="1"/>
</dbReference>
<dbReference type="SUPFAM" id="SSF57840">
    <property type="entry name" value="Ribosomal protein L36"/>
    <property type="match status" value="1"/>
</dbReference>
<dbReference type="PROSITE" id="PS00828">
    <property type="entry name" value="RIBOSOMAL_L36"/>
    <property type="match status" value="1"/>
</dbReference>
<protein>
    <recommendedName>
        <fullName evidence="1">Large ribosomal subunit protein bL36</fullName>
    </recommendedName>
    <alternativeName>
        <fullName evidence="2">50S ribosomal protein L36</fullName>
    </alternativeName>
</protein>
<keyword id="KW-0687">Ribonucleoprotein</keyword>
<keyword id="KW-0689">Ribosomal protein</keyword>
<comment type="similarity">
    <text evidence="1">Belongs to the bacterial ribosomal protein bL36 family.</text>
</comment>
<evidence type="ECO:0000255" key="1">
    <source>
        <dbReference type="HAMAP-Rule" id="MF_00251"/>
    </source>
</evidence>
<evidence type="ECO:0000305" key="2"/>
<feature type="chain" id="PRO_0000302242" description="Large ribosomal subunit protein bL36">
    <location>
        <begin position="1"/>
        <end position="37"/>
    </location>
</feature>
<accession>A1KPE7</accession>
<organism>
    <name type="scientific">Mycobacterium bovis (strain BCG / Pasteur 1173P2)</name>
    <dbReference type="NCBI Taxonomy" id="410289"/>
    <lineage>
        <taxon>Bacteria</taxon>
        <taxon>Bacillati</taxon>
        <taxon>Actinomycetota</taxon>
        <taxon>Actinomycetes</taxon>
        <taxon>Mycobacteriales</taxon>
        <taxon>Mycobacteriaceae</taxon>
        <taxon>Mycobacterium</taxon>
        <taxon>Mycobacterium tuberculosis complex</taxon>
    </lineage>
</organism>